<keyword id="KW-0025">Alternative splicing</keyword>
<keyword id="KW-1015">Disulfide bond</keyword>
<keyword id="KW-0325">Glycoprotein</keyword>
<keyword id="KW-1267">Proteomics identification</keyword>
<keyword id="KW-1185">Reference proteome</keyword>
<keyword id="KW-0964">Secreted</keyword>
<keyword id="KW-0732">Signal</keyword>
<name>CRIS3_HUMAN</name>
<evidence type="ECO:0000255" key="1"/>
<evidence type="ECO:0000255" key="2">
    <source>
        <dbReference type="PROSITE-ProRule" id="PRU01005"/>
    </source>
</evidence>
<evidence type="ECO:0000269" key="3">
    <source>
    </source>
</evidence>
<evidence type="ECO:0000269" key="4">
    <source>
    </source>
</evidence>
<evidence type="ECO:0000269" key="5">
    <source>
    </source>
</evidence>
<evidence type="ECO:0000303" key="6">
    <source>
    </source>
</evidence>
<evidence type="ECO:0000303" key="7">
    <source>
    </source>
</evidence>
<evidence type="ECO:0000305" key="8"/>
<comment type="subunit">
    <text evidence="4">Interacts with A1BG.</text>
</comment>
<comment type="interaction">
    <interactant intactId="EBI-18210151">
        <id>P54108-2</id>
    </interactant>
    <interactant intactId="EBI-13345167">
        <id>Q8TDT2</id>
        <label>GPR152</label>
    </interactant>
    <organismsDiffer>false</organismsDiffer>
    <experiments>3</experiments>
</comment>
<comment type="subcellular location">
    <subcellularLocation>
        <location>Secreted</location>
    </subcellularLocation>
    <text>In neutrophils, localized in specific granules.</text>
</comment>
<comment type="alternative products">
    <event type="alternative splicing"/>
    <isoform>
        <id>P54108-1</id>
        <name>1</name>
        <sequence type="displayed"/>
    </isoform>
    <isoform>
        <id>P54108-2</id>
        <name>2</name>
        <sequence type="described" ref="VSP_042758"/>
    </isoform>
    <isoform>
        <id>P54108-3</id>
        <name>3</name>
        <sequence type="described" ref="VSP_042759"/>
    </isoform>
</comment>
<comment type="tissue specificity">
    <text>Salivary gland, pancreas and prostate &gt; epididymis, ovary, thymus and colon.</text>
</comment>
<comment type="similarity">
    <text evidence="8">Belongs to the CRISP family.</text>
</comment>
<comment type="sequence caution" evidence="8">
    <conflict type="erroneous initiation">
        <sequence resource="EMBL-CDS" id="AAH69580"/>
    </conflict>
    <text>Truncated N-terminus.</text>
</comment>
<comment type="sequence caution" evidence="8">
    <conflict type="erroneous initiation">
        <sequence resource="EMBL-CDS" id="AAH69602"/>
    </conflict>
    <text>Truncated N-terminus.</text>
</comment>
<comment type="sequence caution" evidence="8">
    <conflict type="erroneous initiation">
        <sequence resource="EMBL-CDS" id="BAG36185"/>
    </conflict>
    <text>Truncated N-terminus.</text>
</comment>
<comment type="sequence caution" evidence="8">
    <conflict type="erroneous initiation">
        <sequence resource="EMBL-CDS" id="CAA63984"/>
    </conflict>
    <text>Truncated N-terminus.</text>
</comment>
<comment type="sequence caution" evidence="8">
    <conflict type="erroneous initiation">
        <sequence resource="EMBL-CDS" id="CAA64527"/>
    </conflict>
    <text>Truncated N-terminus.</text>
</comment>
<feature type="signal peptide" evidence="1">
    <location>
        <begin position="1"/>
        <end position="20"/>
    </location>
</feature>
<feature type="chain" id="PRO_0000006268" description="Cysteine-rich secretory protein 3">
    <location>
        <begin position="21"/>
        <end position="245"/>
    </location>
</feature>
<feature type="domain" description="SCP">
    <location>
        <begin position="43"/>
        <end position="171"/>
    </location>
</feature>
<feature type="domain" description="ShKT" evidence="2">
    <location>
        <begin position="207"/>
        <end position="240"/>
    </location>
</feature>
<feature type="glycosylation site" description="N-linked (GlcNAc...) asparagine" evidence="1">
    <location>
        <position position="239"/>
    </location>
</feature>
<feature type="disulfide bond" evidence="2">
    <location>
        <begin position="191"/>
        <end position="198"/>
    </location>
</feature>
<feature type="disulfide bond" evidence="2">
    <location>
        <begin position="194"/>
        <end position="203"/>
    </location>
</feature>
<feature type="disulfide bond" evidence="2">
    <location>
        <begin position="207"/>
        <end position="240"/>
    </location>
</feature>
<feature type="disulfide bond" evidence="2">
    <location>
        <begin position="216"/>
        <end position="234"/>
    </location>
</feature>
<feature type="disulfide bond" evidence="2">
    <location>
        <begin position="225"/>
        <end position="238"/>
    </location>
</feature>
<feature type="splice variant" id="VSP_042758" description="In isoform 2." evidence="6 7">
    <original>M</original>
    <variation>MKQILHPALETTAM</variation>
    <location>
        <position position="1"/>
    </location>
</feature>
<feature type="splice variant" id="VSP_042759" description="In isoform 3." evidence="6">
    <original>M</original>
    <variation>MKQILHPALETTDPCSTGFVFPAM</variation>
    <location>
        <position position="1"/>
    </location>
</feature>
<feature type="sequence variant" id="VAR_011718" description="In dbSNP:rs495335." evidence="3 5">
    <original>S</original>
    <variation>P</variation>
    <location>
        <position position="106"/>
    </location>
</feature>
<feature type="sequence variant" id="VAR_011719" description="In dbSNP:rs1864312." evidence="3">
    <original>A</original>
    <variation>S</variation>
    <location>
        <position position="134"/>
    </location>
</feature>
<feature type="sequence conflict" description="In Ref. 2; BAF85475." evidence="8" ref="2">
    <original>Q</original>
    <variation>R</variation>
    <location>
        <position position="79"/>
    </location>
</feature>
<feature type="sequence conflict" description="In Ref. 3; BAD97100." evidence="8" ref="3">
    <original>K</original>
    <variation>R</variation>
    <location>
        <position position="130"/>
    </location>
</feature>
<reference key="1">
    <citation type="journal article" date="1996" name="FEBS Lett.">
        <title>SGP28, a novel matrix glycoprotein in specific granules of human neutrophils with similarity to a human testis-specific gene product and a rodent sperm-coating glycoprotein.</title>
        <authorList>
            <person name="Kjeldsen L."/>
            <person name="Cowland J.B."/>
            <person name="Johnson A.H."/>
            <person name="Borregaard N."/>
        </authorList>
    </citation>
    <scope>NUCLEOTIDE SEQUENCE [MRNA] (ISOFORM 2)</scope>
</reference>
<reference key="2">
    <citation type="journal article" date="2004" name="Nat. Genet.">
        <title>Complete sequencing and characterization of 21,243 full-length human cDNAs.</title>
        <authorList>
            <person name="Ota T."/>
            <person name="Suzuki Y."/>
            <person name="Nishikawa T."/>
            <person name="Otsuki T."/>
            <person name="Sugiyama T."/>
            <person name="Irie R."/>
            <person name="Wakamatsu A."/>
            <person name="Hayashi K."/>
            <person name="Sato H."/>
            <person name="Nagai K."/>
            <person name="Kimura K."/>
            <person name="Makita H."/>
            <person name="Sekine M."/>
            <person name="Obayashi M."/>
            <person name="Nishi T."/>
            <person name="Shibahara T."/>
            <person name="Tanaka T."/>
            <person name="Ishii S."/>
            <person name="Yamamoto J."/>
            <person name="Saito K."/>
            <person name="Kawai Y."/>
            <person name="Isono Y."/>
            <person name="Nakamura Y."/>
            <person name="Nagahari K."/>
            <person name="Murakami K."/>
            <person name="Yasuda T."/>
            <person name="Iwayanagi T."/>
            <person name="Wagatsuma M."/>
            <person name="Shiratori A."/>
            <person name="Sudo H."/>
            <person name="Hosoiri T."/>
            <person name="Kaku Y."/>
            <person name="Kodaira H."/>
            <person name="Kondo H."/>
            <person name="Sugawara M."/>
            <person name="Takahashi M."/>
            <person name="Kanda K."/>
            <person name="Yokoi T."/>
            <person name="Furuya T."/>
            <person name="Kikkawa E."/>
            <person name="Omura Y."/>
            <person name="Abe K."/>
            <person name="Kamihara K."/>
            <person name="Katsuta N."/>
            <person name="Sato K."/>
            <person name="Tanikawa M."/>
            <person name="Yamazaki M."/>
            <person name="Ninomiya K."/>
            <person name="Ishibashi T."/>
            <person name="Yamashita H."/>
            <person name="Murakawa K."/>
            <person name="Fujimori K."/>
            <person name="Tanai H."/>
            <person name="Kimata M."/>
            <person name="Watanabe M."/>
            <person name="Hiraoka S."/>
            <person name="Chiba Y."/>
            <person name="Ishida S."/>
            <person name="Ono Y."/>
            <person name="Takiguchi S."/>
            <person name="Watanabe S."/>
            <person name="Yosida M."/>
            <person name="Hotuta T."/>
            <person name="Kusano J."/>
            <person name="Kanehori K."/>
            <person name="Takahashi-Fujii A."/>
            <person name="Hara H."/>
            <person name="Tanase T.-O."/>
            <person name="Nomura Y."/>
            <person name="Togiya S."/>
            <person name="Komai F."/>
            <person name="Hara R."/>
            <person name="Takeuchi K."/>
            <person name="Arita M."/>
            <person name="Imose N."/>
            <person name="Musashino K."/>
            <person name="Yuuki H."/>
            <person name="Oshima A."/>
            <person name="Sasaki N."/>
            <person name="Aotsuka S."/>
            <person name="Yoshikawa Y."/>
            <person name="Matsunawa H."/>
            <person name="Ichihara T."/>
            <person name="Shiohata N."/>
            <person name="Sano S."/>
            <person name="Moriya S."/>
            <person name="Momiyama H."/>
            <person name="Satoh N."/>
            <person name="Takami S."/>
            <person name="Terashima Y."/>
            <person name="Suzuki O."/>
            <person name="Nakagawa S."/>
            <person name="Senoh A."/>
            <person name="Mizoguchi H."/>
            <person name="Goto Y."/>
            <person name="Shimizu F."/>
            <person name="Wakebe H."/>
            <person name="Hishigaki H."/>
            <person name="Watanabe T."/>
            <person name="Sugiyama A."/>
            <person name="Takemoto M."/>
            <person name="Kawakami B."/>
            <person name="Yamazaki M."/>
            <person name="Watanabe K."/>
            <person name="Kumagai A."/>
            <person name="Itakura S."/>
            <person name="Fukuzumi Y."/>
            <person name="Fujimori Y."/>
            <person name="Komiyama M."/>
            <person name="Tashiro H."/>
            <person name="Tanigami A."/>
            <person name="Fujiwara T."/>
            <person name="Ono T."/>
            <person name="Yamada K."/>
            <person name="Fujii Y."/>
            <person name="Ozaki K."/>
            <person name="Hirao M."/>
            <person name="Ohmori Y."/>
            <person name="Kawabata A."/>
            <person name="Hikiji T."/>
            <person name="Kobatake N."/>
            <person name="Inagaki H."/>
            <person name="Ikema Y."/>
            <person name="Okamoto S."/>
            <person name="Okitani R."/>
            <person name="Kawakami T."/>
            <person name="Noguchi S."/>
            <person name="Itoh T."/>
            <person name="Shigeta K."/>
            <person name="Senba T."/>
            <person name="Matsumura K."/>
            <person name="Nakajima Y."/>
            <person name="Mizuno T."/>
            <person name="Morinaga M."/>
            <person name="Sasaki M."/>
            <person name="Togashi T."/>
            <person name="Oyama M."/>
            <person name="Hata H."/>
            <person name="Watanabe M."/>
            <person name="Komatsu T."/>
            <person name="Mizushima-Sugano J."/>
            <person name="Satoh T."/>
            <person name="Shirai Y."/>
            <person name="Takahashi Y."/>
            <person name="Nakagawa K."/>
            <person name="Okumura K."/>
            <person name="Nagase T."/>
            <person name="Nomura N."/>
            <person name="Kikuchi H."/>
            <person name="Masuho Y."/>
            <person name="Yamashita R."/>
            <person name="Nakai K."/>
            <person name="Yada T."/>
            <person name="Nakamura Y."/>
            <person name="Ohara O."/>
            <person name="Isogai T."/>
            <person name="Sugano S."/>
        </authorList>
    </citation>
    <scope>NUCLEOTIDE SEQUENCE [LARGE SCALE MRNA] (ISOFORM 2)</scope>
    <scope>NUCLEOTIDE SEQUENCE [MRNA] OF 1-155 (ISOFORM 3)</scope>
    <scope>VARIANTS PRO-106 AND SER-134</scope>
    <source>
        <tissue>Trachea</tissue>
    </source>
</reference>
<reference key="3">
    <citation type="submission" date="2005-04" db="EMBL/GenBank/DDBJ databases">
        <authorList>
            <person name="Totoki Y."/>
            <person name="Toyoda A."/>
            <person name="Takeda T."/>
            <person name="Sakaki Y."/>
            <person name="Tanaka A."/>
            <person name="Yokoyama S."/>
        </authorList>
    </citation>
    <scope>NUCLEOTIDE SEQUENCE [LARGE SCALE MRNA] (ISOFORM 1)</scope>
    <source>
        <tissue>Gastric mucosa</tissue>
    </source>
</reference>
<reference key="4">
    <citation type="journal article" date="2003" name="Nature">
        <title>The DNA sequence and analysis of human chromosome 6.</title>
        <authorList>
            <person name="Mungall A.J."/>
            <person name="Palmer S.A."/>
            <person name="Sims S.K."/>
            <person name="Edwards C.A."/>
            <person name="Ashurst J.L."/>
            <person name="Wilming L."/>
            <person name="Jones M.C."/>
            <person name="Horton R."/>
            <person name="Hunt S.E."/>
            <person name="Scott C.E."/>
            <person name="Gilbert J.G.R."/>
            <person name="Clamp M.E."/>
            <person name="Bethel G."/>
            <person name="Milne S."/>
            <person name="Ainscough R."/>
            <person name="Almeida J.P."/>
            <person name="Ambrose K.D."/>
            <person name="Andrews T.D."/>
            <person name="Ashwell R.I.S."/>
            <person name="Babbage A.K."/>
            <person name="Bagguley C.L."/>
            <person name="Bailey J."/>
            <person name="Banerjee R."/>
            <person name="Barker D.J."/>
            <person name="Barlow K.F."/>
            <person name="Bates K."/>
            <person name="Beare D.M."/>
            <person name="Beasley H."/>
            <person name="Beasley O."/>
            <person name="Bird C.P."/>
            <person name="Blakey S.E."/>
            <person name="Bray-Allen S."/>
            <person name="Brook J."/>
            <person name="Brown A.J."/>
            <person name="Brown J.Y."/>
            <person name="Burford D.C."/>
            <person name="Burrill W."/>
            <person name="Burton J."/>
            <person name="Carder C."/>
            <person name="Carter N.P."/>
            <person name="Chapman J.C."/>
            <person name="Clark S.Y."/>
            <person name="Clark G."/>
            <person name="Clee C.M."/>
            <person name="Clegg S."/>
            <person name="Cobley V."/>
            <person name="Collier R.E."/>
            <person name="Collins J.E."/>
            <person name="Colman L.K."/>
            <person name="Corby N.R."/>
            <person name="Coville G.J."/>
            <person name="Culley K.M."/>
            <person name="Dhami P."/>
            <person name="Davies J."/>
            <person name="Dunn M."/>
            <person name="Earthrowl M.E."/>
            <person name="Ellington A.E."/>
            <person name="Evans K.A."/>
            <person name="Faulkner L."/>
            <person name="Francis M.D."/>
            <person name="Frankish A."/>
            <person name="Frankland J."/>
            <person name="French L."/>
            <person name="Garner P."/>
            <person name="Garnett J."/>
            <person name="Ghori M.J."/>
            <person name="Gilby L.M."/>
            <person name="Gillson C.J."/>
            <person name="Glithero R.J."/>
            <person name="Grafham D.V."/>
            <person name="Grant M."/>
            <person name="Gribble S."/>
            <person name="Griffiths C."/>
            <person name="Griffiths M.N.D."/>
            <person name="Hall R."/>
            <person name="Halls K.S."/>
            <person name="Hammond S."/>
            <person name="Harley J.L."/>
            <person name="Hart E.A."/>
            <person name="Heath P.D."/>
            <person name="Heathcott R."/>
            <person name="Holmes S.J."/>
            <person name="Howden P.J."/>
            <person name="Howe K.L."/>
            <person name="Howell G.R."/>
            <person name="Huckle E."/>
            <person name="Humphray S.J."/>
            <person name="Humphries M.D."/>
            <person name="Hunt A.R."/>
            <person name="Johnson C.M."/>
            <person name="Joy A.A."/>
            <person name="Kay M."/>
            <person name="Keenan S.J."/>
            <person name="Kimberley A.M."/>
            <person name="King A."/>
            <person name="Laird G.K."/>
            <person name="Langford C."/>
            <person name="Lawlor S."/>
            <person name="Leongamornlert D.A."/>
            <person name="Leversha M."/>
            <person name="Lloyd C.R."/>
            <person name="Lloyd D.M."/>
            <person name="Loveland J.E."/>
            <person name="Lovell J."/>
            <person name="Martin S."/>
            <person name="Mashreghi-Mohammadi M."/>
            <person name="Maslen G.L."/>
            <person name="Matthews L."/>
            <person name="McCann O.T."/>
            <person name="McLaren S.J."/>
            <person name="McLay K."/>
            <person name="McMurray A."/>
            <person name="Moore M.J.F."/>
            <person name="Mullikin J.C."/>
            <person name="Niblett D."/>
            <person name="Nickerson T."/>
            <person name="Novik K.L."/>
            <person name="Oliver K."/>
            <person name="Overton-Larty E.K."/>
            <person name="Parker A."/>
            <person name="Patel R."/>
            <person name="Pearce A.V."/>
            <person name="Peck A.I."/>
            <person name="Phillimore B.J.C.T."/>
            <person name="Phillips S."/>
            <person name="Plumb R.W."/>
            <person name="Porter K.M."/>
            <person name="Ramsey Y."/>
            <person name="Ranby S.A."/>
            <person name="Rice C.M."/>
            <person name="Ross M.T."/>
            <person name="Searle S.M."/>
            <person name="Sehra H.K."/>
            <person name="Sheridan E."/>
            <person name="Skuce C.D."/>
            <person name="Smith S."/>
            <person name="Smith M."/>
            <person name="Spraggon L."/>
            <person name="Squares S.L."/>
            <person name="Steward C.A."/>
            <person name="Sycamore N."/>
            <person name="Tamlyn-Hall G."/>
            <person name="Tester J."/>
            <person name="Theaker A.J."/>
            <person name="Thomas D.W."/>
            <person name="Thorpe A."/>
            <person name="Tracey A."/>
            <person name="Tromans A."/>
            <person name="Tubby B."/>
            <person name="Wall M."/>
            <person name="Wallis J.M."/>
            <person name="West A.P."/>
            <person name="White S.S."/>
            <person name="Whitehead S.L."/>
            <person name="Whittaker H."/>
            <person name="Wild A."/>
            <person name="Willey D.J."/>
            <person name="Wilmer T.E."/>
            <person name="Wood J.M."/>
            <person name="Wray P.W."/>
            <person name="Wyatt J.C."/>
            <person name="Young L."/>
            <person name="Younger R.M."/>
            <person name="Bentley D.R."/>
            <person name="Coulson A."/>
            <person name="Durbin R.M."/>
            <person name="Hubbard T."/>
            <person name="Sulston J.E."/>
            <person name="Dunham I."/>
            <person name="Rogers J."/>
            <person name="Beck S."/>
        </authorList>
    </citation>
    <scope>NUCLEOTIDE SEQUENCE [LARGE SCALE GENOMIC DNA]</scope>
</reference>
<reference key="5">
    <citation type="journal article" date="2004" name="Genome Res.">
        <title>The status, quality, and expansion of the NIH full-length cDNA project: the Mammalian Gene Collection (MGC).</title>
        <authorList>
            <consortium name="The MGC Project Team"/>
        </authorList>
    </citation>
    <scope>NUCLEOTIDE SEQUENCE [LARGE SCALE MRNA] (ISOFORM 1)</scope>
    <scope>PARTIAL NUCLEOTIDE SEQUENCE [LARGE SCALE MRNA] (ISOFORM 2)</scope>
    <scope>VARIANT PRO-106</scope>
    <source>
        <tissue>Placenta</tissue>
    </source>
</reference>
<reference key="6">
    <citation type="journal article" date="1996" name="Eur. J. Biochem.">
        <title>The human cysteine-rich secretory protein (CRISP) family. Primary structure and tissue distribution of CRISP-1, CRISP-2 and CRISP-3.</title>
        <authorList>
            <person name="Kraetzschmar J."/>
            <person name="Haendler B."/>
            <person name="Eberspaecher U."/>
            <person name="Roostermann D."/>
            <person name="Donner P."/>
            <person name="Schleuning W.-D."/>
        </authorList>
    </citation>
    <scope>PARTIAL NUCLEOTIDE SEQUENCE [MRNA] (ISOFORM 2)</scope>
</reference>
<reference key="7">
    <citation type="journal article" date="2004" name="Biochemistry">
        <title>Cysteine-rich secretory protein 3 is a ligand of alpha1B-glycoprotein in human plasma.</title>
        <authorList>
            <person name="Udby L."/>
            <person name="Sorensen O.E."/>
            <person name="Pass J."/>
            <person name="Johnsen A.H."/>
            <person name="Behrendt N."/>
            <person name="Borregaard N."/>
            <person name="Kjeldsen L."/>
        </authorList>
    </citation>
    <scope>INTERACTION WITH A1BG</scope>
</reference>
<gene>
    <name type="primary">CRISP3</name>
</gene>
<dbReference type="EMBL" id="X94323">
    <property type="protein sequence ID" value="CAA63984.1"/>
    <property type="status" value="ALT_INIT"/>
    <property type="molecule type" value="mRNA"/>
</dbReference>
<dbReference type="EMBL" id="AK292786">
    <property type="protein sequence ID" value="BAF85475.1"/>
    <property type="molecule type" value="mRNA"/>
</dbReference>
<dbReference type="EMBL" id="AK313387">
    <property type="protein sequence ID" value="BAG36185.1"/>
    <property type="status" value="ALT_INIT"/>
    <property type="molecule type" value="mRNA"/>
</dbReference>
<dbReference type="EMBL" id="DB205467">
    <property type="status" value="NOT_ANNOTATED_CDS"/>
    <property type="molecule type" value="mRNA"/>
</dbReference>
<dbReference type="EMBL" id="AK223380">
    <property type="protein sequence ID" value="BAD97100.1"/>
    <property type="molecule type" value="mRNA"/>
</dbReference>
<dbReference type="EMBL" id="AL121950">
    <property type="status" value="NOT_ANNOTATED_CDS"/>
    <property type="molecule type" value="Genomic_DNA"/>
</dbReference>
<dbReference type="EMBL" id="AL121974">
    <property type="status" value="NOT_ANNOTATED_CDS"/>
    <property type="molecule type" value="Genomic_DNA"/>
</dbReference>
<dbReference type="EMBL" id="BC069580">
    <property type="protein sequence ID" value="AAH69580.1"/>
    <property type="status" value="ALT_INIT"/>
    <property type="molecule type" value="mRNA"/>
</dbReference>
<dbReference type="EMBL" id="BC069602">
    <property type="protein sequence ID" value="AAH69602.1"/>
    <property type="status" value="ALT_INIT"/>
    <property type="molecule type" value="mRNA"/>
</dbReference>
<dbReference type="EMBL" id="BC101539">
    <property type="protein sequence ID" value="AAI01540.1"/>
    <property type="molecule type" value="mRNA"/>
</dbReference>
<dbReference type="EMBL" id="X95240">
    <property type="protein sequence ID" value="CAA64527.1"/>
    <property type="status" value="ALT_INIT"/>
    <property type="molecule type" value="mRNA"/>
</dbReference>
<dbReference type="CCDS" id="CCDS4929.2">
    <molecule id="P54108-2"/>
</dbReference>
<dbReference type="CCDS" id="CCDS55019.1">
    <molecule id="P54108-3"/>
</dbReference>
<dbReference type="PIR" id="S68691">
    <property type="entry name" value="S68691"/>
</dbReference>
<dbReference type="RefSeq" id="NP_001177915.1">
    <molecule id="P54108-3"/>
    <property type="nucleotide sequence ID" value="NM_001190986.3"/>
</dbReference>
<dbReference type="RefSeq" id="NP_006052.2">
    <molecule id="P54108-2"/>
    <property type="nucleotide sequence ID" value="NM_006061.4"/>
</dbReference>
<dbReference type="SMR" id="P54108"/>
<dbReference type="BioGRID" id="115605">
    <property type="interactions" value="25"/>
</dbReference>
<dbReference type="FunCoup" id="P54108">
    <property type="interactions" value="6"/>
</dbReference>
<dbReference type="IntAct" id="P54108">
    <property type="interactions" value="4"/>
</dbReference>
<dbReference type="STRING" id="9606.ENSP00000389026"/>
<dbReference type="GlyConnect" id="1163">
    <property type="glycosylation" value="2 N-Linked glycans (1 site)"/>
</dbReference>
<dbReference type="GlyCosmos" id="P54108">
    <property type="glycosylation" value="2 sites, 3 glycans"/>
</dbReference>
<dbReference type="GlyGen" id="P54108">
    <property type="glycosylation" value="2 sites, 6 N-linked glycans (1 site), 1 O-linked glycan (1 site)"/>
</dbReference>
<dbReference type="iPTMnet" id="P54108"/>
<dbReference type="PhosphoSitePlus" id="P54108"/>
<dbReference type="BioMuta" id="CRISP3"/>
<dbReference type="DMDM" id="1706135"/>
<dbReference type="jPOST" id="P54108"/>
<dbReference type="MassIVE" id="P54108"/>
<dbReference type="PaxDb" id="9606-ENSP00000389026"/>
<dbReference type="PeptideAtlas" id="P54108"/>
<dbReference type="PRIDE" id="P54108"/>
<dbReference type="ProteomicsDB" id="56646">
    <molecule id="P54108-1"/>
</dbReference>
<dbReference type="ProteomicsDB" id="56647">
    <molecule id="P54108-2"/>
</dbReference>
<dbReference type="ProteomicsDB" id="56648">
    <molecule id="P54108-3"/>
</dbReference>
<dbReference type="TopDownProteomics" id="P54108-1">
    <molecule id="P54108-1"/>
</dbReference>
<dbReference type="Antibodypedia" id="30841">
    <property type="antibodies" value="202 antibodies from 28 providers"/>
</dbReference>
<dbReference type="DNASU" id="10321"/>
<dbReference type="Ensembl" id="ENST00000263045.9">
    <molecule id="P54108-2"/>
    <property type="protein sequence ID" value="ENSP00000263045.4"/>
    <property type="gene ID" value="ENSG00000096006.12"/>
</dbReference>
<dbReference type="Ensembl" id="ENST00000433368.6">
    <molecule id="P54108-3"/>
    <property type="protein sequence ID" value="ENSP00000389026.2"/>
    <property type="gene ID" value="ENSG00000096006.12"/>
</dbReference>
<dbReference type="GeneID" id="10321"/>
<dbReference type="KEGG" id="hsa:10321"/>
<dbReference type="MANE-Select" id="ENST00000263045.9">
    <molecule id="P54108-2"/>
    <property type="protein sequence ID" value="ENSP00000263045.4"/>
    <property type="RefSeq nucleotide sequence ID" value="NM_006061.4"/>
    <property type="RefSeq protein sequence ID" value="NP_006052.2"/>
</dbReference>
<dbReference type="UCSC" id="uc003ozs.5">
    <molecule id="P54108-1"/>
    <property type="organism name" value="human"/>
</dbReference>
<dbReference type="AGR" id="HGNC:16904"/>
<dbReference type="CTD" id="10321"/>
<dbReference type="DisGeNET" id="10321"/>
<dbReference type="GeneCards" id="CRISP3"/>
<dbReference type="HGNC" id="HGNC:16904">
    <property type="gene designation" value="CRISP3"/>
</dbReference>
<dbReference type="HPA" id="ENSG00000096006">
    <property type="expression patterns" value="Group enriched (fallopian tube, salivary gland)"/>
</dbReference>
<dbReference type="MIM" id="618062">
    <property type="type" value="gene"/>
</dbReference>
<dbReference type="neXtProt" id="NX_P54108"/>
<dbReference type="OpenTargets" id="ENSG00000096006"/>
<dbReference type="PharmGKB" id="PA134880440"/>
<dbReference type="VEuPathDB" id="HostDB:ENSG00000096006"/>
<dbReference type="eggNOG" id="KOG3017">
    <property type="taxonomic scope" value="Eukaryota"/>
</dbReference>
<dbReference type="GeneTree" id="ENSGT00940000162013"/>
<dbReference type="InParanoid" id="P54108"/>
<dbReference type="OMA" id="LYMSSFQ"/>
<dbReference type="OrthoDB" id="737510at2759"/>
<dbReference type="PAN-GO" id="P54108">
    <property type="GO annotations" value="1 GO annotation based on evolutionary models"/>
</dbReference>
<dbReference type="PhylomeDB" id="P54108"/>
<dbReference type="TreeFam" id="TF316148"/>
<dbReference type="PathwayCommons" id="P54108"/>
<dbReference type="Reactome" id="R-HSA-6798695">
    <property type="pathway name" value="Neutrophil degranulation"/>
</dbReference>
<dbReference type="SignaLink" id="P54108"/>
<dbReference type="BioGRID-ORCS" id="10321">
    <property type="hits" value="7 hits in 1137 CRISPR screens"/>
</dbReference>
<dbReference type="ChiTaRS" id="CRISP3">
    <property type="organism name" value="human"/>
</dbReference>
<dbReference type="GeneWiki" id="CRISP3"/>
<dbReference type="GenomeRNAi" id="10321"/>
<dbReference type="Pharos" id="P54108">
    <property type="development level" value="Tbio"/>
</dbReference>
<dbReference type="PRO" id="PR:P54108"/>
<dbReference type="Proteomes" id="UP000005640">
    <property type="component" value="Chromosome 6"/>
</dbReference>
<dbReference type="RNAct" id="P54108">
    <property type="molecule type" value="protein"/>
</dbReference>
<dbReference type="Bgee" id="ENSG00000096006">
    <property type="expression patterns" value="Expressed in pancreatic ductal cell and 124 other cell types or tissues"/>
</dbReference>
<dbReference type="ExpressionAtlas" id="P54108">
    <property type="expression patterns" value="baseline and differential"/>
</dbReference>
<dbReference type="GO" id="GO:0031012">
    <property type="term" value="C:extracellular matrix"/>
    <property type="evidence" value="ECO:0000303"/>
    <property type="project" value="UniProtKB"/>
</dbReference>
<dbReference type="GO" id="GO:0005576">
    <property type="term" value="C:extracellular region"/>
    <property type="evidence" value="ECO:0000314"/>
    <property type="project" value="UniProtKB"/>
</dbReference>
<dbReference type="GO" id="GO:0005615">
    <property type="term" value="C:extracellular space"/>
    <property type="evidence" value="ECO:0007005"/>
    <property type="project" value="UniProtKB"/>
</dbReference>
<dbReference type="GO" id="GO:0042581">
    <property type="term" value="C:specific granule"/>
    <property type="evidence" value="ECO:0000314"/>
    <property type="project" value="UniProtKB"/>
</dbReference>
<dbReference type="GO" id="GO:0035580">
    <property type="term" value="C:specific granule lumen"/>
    <property type="evidence" value="ECO:0000304"/>
    <property type="project" value="Reactome"/>
</dbReference>
<dbReference type="GO" id="GO:1904724">
    <property type="term" value="C:tertiary granule lumen"/>
    <property type="evidence" value="ECO:0000304"/>
    <property type="project" value="Reactome"/>
</dbReference>
<dbReference type="GO" id="GO:0006952">
    <property type="term" value="P:defense response"/>
    <property type="evidence" value="ECO:0000303"/>
    <property type="project" value="UniProtKB"/>
</dbReference>
<dbReference type="GO" id="GO:0045087">
    <property type="term" value="P:innate immune response"/>
    <property type="evidence" value="ECO:0000303"/>
    <property type="project" value="UniProtKB"/>
</dbReference>
<dbReference type="GO" id="GO:0019953">
    <property type="term" value="P:sexual reproduction"/>
    <property type="evidence" value="ECO:0000318"/>
    <property type="project" value="GO_Central"/>
</dbReference>
<dbReference type="CDD" id="cd05383">
    <property type="entry name" value="CAP_CRISP"/>
    <property type="match status" value="1"/>
</dbReference>
<dbReference type="FunFam" id="1.10.10.740:FF:000001">
    <property type="entry name" value="Cysteine-rich secretory protein 2"/>
    <property type="match status" value="1"/>
</dbReference>
<dbReference type="FunFam" id="3.40.33.10:FF:000005">
    <property type="entry name" value="Cysteine-rich secretory protein 2"/>
    <property type="match status" value="1"/>
</dbReference>
<dbReference type="Gene3D" id="3.40.33.10">
    <property type="entry name" value="CAP"/>
    <property type="match status" value="1"/>
</dbReference>
<dbReference type="Gene3D" id="1.10.10.740">
    <property type="entry name" value="Crisp domain"/>
    <property type="match status" value="1"/>
</dbReference>
<dbReference type="InterPro" id="IPR018244">
    <property type="entry name" value="Allrgn_V5/Tpx1_CS"/>
</dbReference>
<dbReference type="InterPro" id="IPR014044">
    <property type="entry name" value="CAP_dom"/>
</dbReference>
<dbReference type="InterPro" id="IPR035940">
    <property type="entry name" value="CAP_sf"/>
</dbReference>
<dbReference type="InterPro" id="IPR042076">
    <property type="entry name" value="Crisp-like_dom"/>
</dbReference>
<dbReference type="InterPro" id="IPR001283">
    <property type="entry name" value="CRISP-related"/>
</dbReference>
<dbReference type="InterPro" id="IPR013871">
    <property type="entry name" value="Cysteine_rich_secretory"/>
</dbReference>
<dbReference type="InterPro" id="IPR034117">
    <property type="entry name" value="SCP_CRISP"/>
</dbReference>
<dbReference type="InterPro" id="IPR003582">
    <property type="entry name" value="ShKT_dom"/>
</dbReference>
<dbReference type="PANTHER" id="PTHR10334">
    <property type="entry name" value="CYSTEINE-RICH SECRETORY PROTEIN-RELATED"/>
    <property type="match status" value="1"/>
</dbReference>
<dbReference type="Pfam" id="PF00188">
    <property type="entry name" value="CAP"/>
    <property type="match status" value="1"/>
</dbReference>
<dbReference type="Pfam" id="PF08562">
    <property type="entry name" value="Crisp"/>
    <property type="match status" value="1"/>
</dbReference>
<dbReference type="PRINTS" id="PR00837">
    <property type="entry name" value="V5TPXLIKE"/>
</dbReference>
<dbReference type="SMART" id="SM00198">
    <property type="entry name" value="SCP"/>
    <property type="match status" value="1"/>
</dbReference>
<dbReference type="SUPFAM" id="SSF57546">
    <property type="entry name" value="Crisp domain-like"/>
    <property type="match status" value="1"/>
</dbReference>
<dbReference type="SUPFAM" id="SSF55797">
    <property type="entry name" value="PR-1-like"/>
    <property type="match status" value="1"/>
</dbReference>
<dbReference type="PROSITE" id="PS01009">
    <property type="entry name" value="CRISP_1"/>
    <property type="match status" value="1"/>
</dbReference>
<dbReference type="PROSITE" id="PS01010">
    <property type="entry name" value="CRISP_2"/>
    <property type="match status" value="1"/>
</dbReference>
<dbReference type="PROSITE" id="PS51670">
    <property type="entry name" value="SHKT"/>
    <property type="match status" value="1"/>
</dbReference>
<proteinExistence type="evidence at protein level"/>
<accession>P54108</accession>
<accession>A8K9S1</accession>
<accession>B2R8I8</accession>
<accession>Q15512</accession>
<accession>Q3MJ82</accession>
<accession>Q53FA9</accession>
<accession>Q5JW83</accession>
<accession>Q9H108</accession>
<protein>
    <recommendedName>
        <fullName>Cysteine-rich secretory protein 3</fullName>
        <shortName>CRISP-3</shortName>
    </recommendedName>
    <alternativeName>
        <fullName>Specific granule protein of 28 kDa</fullName>
        <shortName>SGP28</shortName>
    </alternativeName>
</protein>
<organism>
    <name type="scientific">Homo sapiens</name>
    <name type="common">Human</name>
    <dbReference type="NCBI Taxonomy" id="9606"/>
    <lineage>
        <taxon>Eukaryota</taxon>
        <taxon>Metazoa</taxon>
        <taxon>Chordata</taxon>
        <taxon>Craniata</taxon>
        <taxon>Vertebrata</taxon>
        <taxon>Euteleostomi</taxon>
        <taxon>Mammalia</taxon>
        <taxon>Eutheria</taxon>
        <taxon>Euarchontoglires</taxon>
        <taxon>Primates</taxon>
        <taxon>Haplorrhini</taxon>
        <taxon>Catarrhini</taxon>
        <taxon>Hominidae</taxon>
        <taxon>Homo</taxon>
    </lineage>
</organism>
<sequence>MTLFPVLLFLVAGLLPSFPANEDKDPAFTALLTTQTQVQREIVNKHNELRRAVSPPARNMLKMEWNKEAAANAQKWANQCNYRHSNPKDRMTSLKCGENLYMSSASSSWSQAIQSWFDEYNDFDFGVGPKTPNAVVGHYTQVVWYSSYLVGCGNAYCPNQKVLKYYYVCQYCPAGNWANRLYVPYEQGAPCASCPDNCDDGLCTNGCKYEDLYSNCKSLKLTLTCKHQLVRDSCKASCNCSNSIY</sequence>